<accession>P55073</accession>
<accession>G3XAM0</accession>
<accession>Q8WVN5</accession>
<proteinExistence type="evidence at protein level"/>
<gene>
    <name type="primary">DIO3</name>
    <name type="synonym">ITDI3</name>
    <name type="synonym">TXDI3</name>
</gene>
<protein>
    <recommendedName>
        <fullName>Thyroxine 5-deiodinase</fullName>
        <ecNumber evidence="5">1.21.99.3</ecNumber>
    </recommendedName>
    <alternativeName>
        <fullName>5DIII</fullName>
    </alternativeName>
    <alternativeName>
        <fullName>DIOIII</fullName>
    </alternativeName>
    <alternativeName>
        <fullName>Type 3 DI</fullName>
    </alternativeName>
    <alternativeName>
        <fullName>Type III iodothyronine deiodinase</fullName>
    </alternativeName>
</protein>
<sequence>MPRQATSRLVVGEGEGSQGASGPAATMLRSLLLHSLRLCAQTASCLVLFPRFLGTAFMLWLLDFLCIRKHFLGRRRRGQPEPEVELNSEGEEVPPDDPPICVSDDNRLCTLASLKAVWHGQKLDFFKQAHEGGPAPNSEVVLPDGFQSQHILDYAQGNRPLVLNFGSCTUPPFMARMSAFQRLVTKYQRDVDFLIIYIEEAHPSDGWVTTDSPYIIPQHRSLEDRVSAARVLQQGAPGCALVLDTMANSSSSAYGAYFERLYVIQSGTIMYQGGRGPDGYQVSELRTWLERYDEQLHGARPRRV</sequence>
<reference key="1">
    <citation type="journal article" date="1995" name="J. Clin. Invest.">
        <title>Type 3 iodothyronine deiodinase: cloning, in vitro expression, and functional analysis of the placental selenoenzyme.</title>
        <authorList>
            <person name="Salvatore D."/>
            <person name="Low S.C."/>
            <person name="Berry M."/>
            <person name="Maia A.L."/>
            <person name="Harney J.W."/>
            <person name="Croteau W."/>
            <person name="St Germain D.L."/>
            <person name="Larsen P.R."/>
        </authorList>
    </citation>
    <scope>NUCLEOTIDE SEQUENCE [MRNA]</scope>
    <scope>FUNCTION</scope>
    <scope>CATALYTIC ACTIVITY</scope>
    <scope>BIOPHYSICOCHEMICAL PROPERTIES</scope>
    <scope>TISSUE SPECIFICITY</scope>
    <source>
        <tissue>Placenta</tissue>
    </source>
</reference>
<reference key="2">
    <citation type="journal article" date="2003" name="Nature">
        <title>The DNA sequence and analysis of human chromosome 14.</title>
        <authorList>
            <person name="Heilig R."/>
            <person name="Eckenberg R."/>
            <person name="Petit J.-L."/>
            <person name="Fonknechten N."/>
            <person name="Da Silva C."/>
            <person name="Cattolico L."/>
            <person name="Levy M."/>
            <person name="Barbe V."/>
            <person name="De Berardinis V."/>
            <person name="Ureta-Vidal A."/>
            <person name="Pelletier E."/>
            <person name="Vico V."/>
            <person name="Anthouard V."/>
            <person name="Rowen L."/>
            <person name="Madan A."/>
            <person name="Qin S."/>
            <person name="Sun H."/>
            <person name="Du H."/>
            <person name="Pepin K."/>
            <person name="Artiguenave F."/>
            <person name="Robert C."/>
            <person name="Cruaud C."/>
            <person name="Bruels T."/>
            <person name="Jaillon O."/>
            <person name="Friedlander L."/>
            <person name="Samson G."/>
            <person name="Brottier P."/>
            <person name="Cure S."/>
            <person name="Segurens B."/>
            <person name="Aniere F."/>
            <person name="Samain S."/>
            <person name="Crespeau H."/>
            <person name="Abbasi N."/>
            <person name="Aiach N."/>
            <person name="Boscus D."/>
            <person name="Dickhoff R."/>
            <person name="Dors M."/>
            <person name="Dubois I."/>
            <person name="Friedman C."/>
            <person name="Gouyvenoux M."/>
            <person name="James R."/>
            <person name="Madan A."/>
            <person name="Mairey-Estrada B."/>
            <person name="Mangenot S."/>
            <person name="Martins N."/>
            <person name="Menard M."/>
            <person name="Oztas S."/>
            <person name="Ratcliffe A."/>
            <person name="Shaffer T."/>
            <person name="Trask B."/>
            <person name="Vacherie B."/>
            <person name="Bellemere C."/>
            <person name="Belser C."/>
            <person name="Besnard-Gonnet M."/>
            <person name="Bartol-Mavel D."/>
            <person name="Boutard M."/>
            <person name="Briez-Silla S."/>
            <person name="Combette S."/>
            <person name="Dufosse-Laurent V."/>
            <person name="Ferron C."/>
            <person name="Lechaplais C."/>
            <person name="Louesse C."/>
            <person name="Muselet D."/>
            <person name="Magdelenat G."/>
            <person name="Pateau E."/>
            <person name="Petit E."/>
            <person name="Sirvain-Trukniewicz P."/>
            <person name="Trybou A."/>
            <person name="Vega-Czarny N."/>
            <person name="Bataille E."/>
            <person name="Bluet E."/>
            <person name="Bordelais I."/>
            <person name="Dubois M."/>
            <person name="Dumont C."/>
            <person name="Guerin T."/>
            <person name="Haffray S."/>
            <person name="Hammadi R."/>
            <person name="Muanga J."/>
            <person name="Pellouin V."/>
            <person name="Robert D."/>
            <person name="Wunderle E."/>
            <person name="Gauguet G."/>
            <person name="Roy A."/>
            <person name="Sainte-Marthe L."/>
            <person name="Verdier J."/>
            <person name="Verdier-Discala C."/>
            <person name="Hillier L.W."/>
            <person name="Fulton L."/>
            <person name="McPherson J."/>
            <person name="Matsuda F."/>
            <person name="Wilson R."/>
            <person name="Scarpelli C."/>
            <person name="Gyapay G."/>
            <person name="Wincker P."/>
            <person name="Saurin W."/>
            <person name="Quetier F."/>
            <person name="Waterston R."/>
            <person name="Hood L."/>
            <person name="Weissenbach J."/>
        </authorList>
    </citation>
    <scope>NUCLEOTIDE SEQUENCE [LARGE SCALE GENOMIC DNA]</scope>
</reference>
<reference key="3">
    <citation type="journal article" date="2004" name="Genome Res.">
        <title>The status, quality, and expansion of the NIH full-length cDNA project: the Mammalian Gene Collection (MGC).</title>
        <authorList>
            <consortium name="The MGC Project Team"/>
        </authorList>
    </citation>
    <scope>NUCLEOTIDE SEQUENCE [LARGE SCALE MRNA] OF 3-304</scope>
    <source>
        <tissue>Duodenum</tissue>
    </source>
</reference>
<reference key="4">
    <citation type="journal article" date="2003" name="Endocrinology">
        <title>In vivo dimerization of types 1, 2, and 3 iodothyronine selenodeiodinases.</title>
        <authorList>
            <person name="Curcio-Morelli C."/>
            <person name="Gereben B."/>
            <person name="Zavacki A.M."/>
            <person name="Kim B.W."/>
            <person name="Huang S."/>
            <person name="Harney J.W."/>
            <person name="Larsen P.R."/>
            <person name="Bianco A.C."/>
        </authorList>
    </citation>
    <scope>FUNCTION</scope>
    <scope>CATALYTIC ACTIVITY</scope>
    <scope>SUBUNIT</scope>
</reference>
<reference key="5">
    <citation type="journal article" date="2003" name="Endocrinology">
        <title>Substitution of cysteine for selenocysteine in the catalytic center of type III iodothyronine deiodinase reduces catalytic efficiency and alters substrate preference.</title>
        <authorList>
            <person name="Kuiper G.G."/>
            <person name="Klootwijk W."/>
            <person name="Visser T.J."/>
        </authorList>
    </citation>
    <scope>MUTAGENESIS OF SEC-170</scope>
    <scope>CATALYTIC ACTIVITY</scope>
    <scope>BIOPHYSICOCHEMICAL PROPERTIES</scope>
    <scope>FUNCTION</scope>
    <scope>SELENOCYSTEINE AT SEC-170</scope>
    <scope>ACTIVE SITE</scope>
</reference>
<reference key="6">
    <citation type="journal article" date="2003" name="J. Biol. Chem.">
        <title>Human type 3 iodothyronine selenodeiodinase is located in the plasma membrane and undergoes rapid internalization to endosomes.</title>
        <authorList>
            <person name="Baqui M."/>
            <person name="Botero D."/>
            <person name="Gereben B."/>
            <person name="Curcio C."/>
            <person name="Harney J.W."/>
            <person name="Salvatore D."/>
            <person name="Sorimachi K."/>
            <person name="Larsen P.R."/>
            <person name="Bianco A.C."/>
        </authorList>
    </citation>
    <scope>SUBCELLULAR LOCATION</scope>
</reference>
<reference key="7">
    <citation type="journal article" date="2008" name="Endocrinology">
        <title>Thyronamines are isozyme-specific substrates of deiodinases.</title>
        <authorList>
            <person name="Piehl S."/>
            <person name="Heberer T."/>
            <person name="Balizs G."/>
            <person name="Scanlan T.S."/>
            <person name="Smits R."/>
            <person name="Koksch B."/>
            <person name="Koehrle J."/>
        </authorList>
    </citation>
    <scope>FUNCTION</scope>
    <scope>CATALYTIC ACTIVITY</scope>
    <scope>BIOPHYSICOCHEMICAL PROPERTIES</scope>
</reference>
<reference key="8">
    <citation type="journal article" date="2008" name="Mol. Endocrinol.">
        <title>The thyroid hormone-inactivating deiodinase functions as a homodimer.</title>
        <authorList>
            <person name="Sagar G.D."/>
            <person name="Gereben B."/>
            <person name="Callebaut I."/>
            <person name="Mornon J.P."/>
            <person name="Zeold A."/>
            <person name="Curcio-Morelli C."/>
            <person name="Harney J.W."/>
            <person name="Luongo C."/>
            <person name="Mulcahey M.A."/>
            <person name="Larsen P.R."/>
            <person name="Huang S.A."/>
            <person name="Bianco A.C."/>
        </authorList>
    </citation>
    <scope>SUBUNIT</scope>
</reference>
<reference key="9">
    <citation type="journal article" date="2008" name="Rapid Commun. Mass Spectrom.">
        <title>Development of a validated liquid chromatography/tandem mass spectrometry method for the distinction of thyronine and thyronamine constitutional isomers and for the identification of new deiodinase substrates.</title>
        <authorList>
            <person name="Piehl S."/>
            <person name="Heberer T."/>
            <person name="Balizs G."/>
            <person name="Scanlan T.S."/>
            <person name="Koehrle J."/>
        </authorList>
    </citation>
    <scope>FUNCTION</scope>
    <scope>CATALYTIC ACTIVITY</scope>
</reference>
<keyword id="KW-1003">Cell membrane</keyword>
<keyword id="KW-0967">Endosome</keyword>
<keyword id="KW-0472">Membrane</keyword>
<keyword id="KW-0560">Oxidoreductase</keyword>
<keyword id="KW-1267">Proteomics identification</keyword>
<keyword id="KW-1185">Reference proteome</keyword>
<keyword id="KW-0712">Selenocysteine</keyword>
<keyword id="KW-0735">Signal-anchor</keyword>
<keyword id="KW-0893">Thyroid hormones biosynthesis</keyword>
<keyword id="KW-0812">Transmembrane</keyword>
<keyword id="KW-1133">Transmembrane helix</keyword>
<name>IOD3_HUMAN</name>
<feature type="chain" id="PRO_0000154323" description="Thyroxine 5-deiodinase">
    <location>
        <begin position="1"/>
        <end position="304"/>
    </location>
</feature>
<feature type="topological domain" description="Cytoplasmic" evidence="1">
    <location>
        <begin position="1"/>
        <end position="44"/>
    </location>
</feature>
<feature type="transmembrane region" description="Helical; Signal-anchor for type II membrane protein" evidence="1">
    <location>
        <begin position="45"/>
        <end position="67"/>
    </location>
</feature>
<feature type="topological domain" description="Extracellular" evidence="1">
    <location>
        <begin position="68"/>
        <end position="304"/>
    </location>
</feature>
<feature type="region of interest" description="Disordered" evidence="2">
    <location>
        <begin position="1"/>
        <end position="23"/>
    </location>
</feature>
<feature type="region of interest" description="Disordered" evidence="2">
    <location>
        <begin position="78"/>
        <end position="99"/>
    </location>
</feature>
<feature type="compositionally biased region" description="Acidic residues" evidence="2">
    <location>
        <begin position="82"/>
        <end position="95"/>
    </location>
</feature>
<feature type="active site" evidence="5">
    <location>
        <position position="170"/>
    </location>
</feature>
<feature type="non-standard amino acid" description="Selenocysteine" evidence="5">
    <location>
        <position position="170"/>
    </location>
</feature>
<feature type="mutagenesis site" description="Complete loss of enzyme activity towards 3,5,3'-triiodothyronine." evidence="5">
    <original>U</original>
    <variation>A</variation>
    <location>
        <position position="170"/>
    </location>
</feature>
<feature type="sequence conflict" description="In Ref. 1; AAB35616." evidence="10" ref="1">
    <original>R</original>
    <variation>H</variation>
    <location>
        <position position="29"/>
    </location>
</feature>
<feature type="sequence conflict" description="In Ref. 1; AAB35616." evidence="10" ref="1">
    <original>Q</original>
    <variation>K</variation>
    <location>
        <position position="79"/>
    </location>
</feature>
<dbReference type="EC" id="1.21.99.3" evidence="5"/>
<dbReference type="EMBL" id="S79854">
    <property type="protein sequence ID" value="AAB35616.2"/>
    <property type="status" value="ALT_FRAME"/>
    <property type="molecule type" value="mRNA"/>
</dbReference>
<dbReference type="EMBL" id="AL049836">
    <property type="status" value="NOT_ANNOTATED_CDS"/>
    <property type="molecule type" value="Genomic_DNA"/>
</dbReference>
<dbReference type="EMBL" id="BC017717">
    <property type="protein sequence ID" value="AAH17717.2"/>
    <property type="status" value="ALT_INIT"/>
    <property type="molecule type" value="mRNA"/>
</dbReference>
<dbReference type="CCDS" id="CCDS41992.2"/>
<dbReference type="RefSeq" id="NP_001353.4">
    <property type="nucleotide sequence ID" value="NM_001362.3"/>
</dbReference>
<dbReference type="BioGRID" id="108079">
    <property type="interactions" value="21"/>
</dbReference>
<dbReference type="FunCoup" id="P55073">
    <property type="interactions" value="147"/>
</dbReference>
<dbReference type="IntAct" id="P55073">
    <property type="interactions" value="16"/>
</dbReference>
<dbReference type="STRING" id="9606.ENSP00000427336"/>
<dbReference type="ChEMBL" id="CHEMBL3611"/>
<dbReference type="DrugBank" id="DB09333">
    <property type="generic name" value="Iopodic acid"/>
</dbReference>
<dbReference type="DrugBank" id="DB09100">
    <property type="generic name" value="Thyroid, porcine"/>
</dbReference>
<dbReference type="iPTMnet" id="P55073"/>
<dbReference type="PhosphoSitePlus" id="P55073"/>
<dbReference type="SwissPalm" id="P55073"/>
<dbReference type="BioMuta" id="DIO3"/>
<dbReference type="DMDM" id="172045679"/>
<dbReference type="MassIVE" id="P55073"/>
<dbReference type="PaxDb" id="9606-ENSP00000427336"/>
<dbReference type="PeptideAtlas" id="P55073"/>
<dbReference type="ProteomicsDB" id="33783"/>
<dbReference type="ProteomicsDB" id="56777"/>
<dbReference type="Antibodypedia" id="56330">
    <property type="antibodies" value="307 antibodies from 28 providers"/>
</dbReference>
<dbReference type="DNASU" id="1735"/>
<dbReference type="Ensembl" id="ENST00000510508.5">
    <property type="protein sequence ID" value="ENSP00000427336.3"/>
    <property type="gene ID" value="ENSG00000197406.8"/>
</dbReference>
<dbReference type="GeneID" id="1735"/>
<dbReference type="KEGG" id="hsa:1735"/>
<dbReference type="MANE-Select" id="ENST00000510508.5">
    <property type="protein sequence ID" value="ENSP00000427336.3"/>
    <property type="RefSeq nucleotide sequence ID" value="NM_001362.4"/>
    <property type="RefSeq protein sequence ID" value="NP_001353.4"/>
</dbReference>
<dbReference type="UCSC" id="uc021sdx.1">
    <property type="organism name" value="human"/>
</dbReference>
<dbReference type="AGR" id="HGNC:2885"/>
<dbReference type="CTD" id="1735"/>
<dbReference type="DisGeNET" id="1735"/>
<dbReference type="GeneCards" id="DIO3"/>
<dbReference type="HGNC" id="HGNC:2885">
    <property type="gene designation" value="DIO3"/>
</dbReference>
<dbReference type="HPA" id="ENSG00000197406">
    <property type="expression patterns" value="Tissue enhanced (cervix, placenta)"/>
</dbReference>
<dbReference type="MIM" id="601038">
    <property type="type" value="gene"/>
</dbReference>
<dbReference type="neXtProt" id="NX_P55073"/>
<dbReference type="OpenTargets" id="ENSG00000197406"/>
<dbReference type="PharmGKB" id="PA27339"/>
<dbReference type="VEuPathDB" id="HostDB:ENSG00000197406"/>
<dbReference type="eggNOG" id="ENOG502S5FA">
    <property type="taxonomic scope" value="Eukaryota"/>
</dbReference>
<dbReference type="GeneTree" id="ENSGT00940000154482"/>
<dbReference type="HOGENOM" id="CLU_089345_0_0_1"/>
<dbReference type="InParanoid" id="P55073"/>
<dbReference type="OMA" id="CSXPPFM"/>
<dbReference type="OrthoDB" id="428577at2759"/>
<dbReference type="PAN-GO" id="P55073">
    <property type="GO annotations" value="2 GO annotations based on evolutionary models"/>
</dbReference>
<dbReference type="PhylomeDB" id="P55073"/>
<dbReference type="TreeFam" id="TF329721"/>
<dbReference type="BioCyc" id="MetaCyc:HS11928-MONOMER"/>
<dbReference type="BRENDA" id="1.21.99.3">
    <property type="organism ID" value="2681"/>
</dbReference>
<dbReference type="PathwayCommons" id="P55073"/>
<dbReference type="Reactome" id="R-HSA-350864">
    <property type="pathway name" value="Regulation of thyroid hormone activity"/>
</dbReference>
<dbReference type="SABIO-RK" id="P55073"/>
<dbReference type="SIGNOR" id="P55073"/>
<dbReference type="BioGRID-ORCS" id="1735">
    <property type="hits" value="9 hits in 1146 CRISPR screens"/>
</dbReference>
<dbReference type="GenomeRNAi" id="1735"/>
<dbReference type="Pharos" id="P55073">
    <property type="development level" value="Tbio"/>
</dbReference>
<dbReference type="PRO" id="PR:P55073"/>
<dbReference type="Proteomes" id="UP000005640">
    <property type="component" value="Chromosome 14"/>
</dbReference>
<dbReference type="RNAct" id="P55073">
    <property type="molecule type" value="protein"/>
</dbReference>
<dbReference type="Bgee" id="ENSG00000197406">
    <property type="expression patterns" value="Expressed in endocervix and 102 other cell types or tissues"/>
</dbReference>
<dbReference type="GO" id="GO:0010008">
    <property type="term" value="C:endosome membrane"/>
    <property type="evidence" value="ECO:0007669"/>
    <property type="project" value="UniProtKB-SubCell"/>
</dbReference>
<dbReference type="GO" id="GO:0043231">
    <property type="term" value="C:intracellular membrane-bounded organelle"/>
    <property type="evidence" value="ECO:0000314"/>
    <property type="project" value="HPA"/>
</dbReference>
<dbReference type="GO" id="GO:0005886">
    <property type="term" value="C:plasma membrane"/>
    <property type="evidence" value="ECO:0000304"/>
    <property type="project" value="Reactome"/>
</dbReference>
<dbReference type="GO" id="GO:0004800">
    <property type="term" value="F:thyroxine 5'-deiodinase activity"/>
    <property type="evidence" value="ECO:0000304"/>
    <property type="project" value="Reactome"/>
</dbReference>
<dbReference type="GO" id="GO:0033798">
    <property type="term" value="F:thyroxine 5-deiodinase activity"/>
    <property type="evidence" value="ECO:0000314"/>
    <property type="project" value="UniProtKB"/>
</dbReference>
<dbReference type="GO" id="GO:0070342">
    <property type="term" value="P:brown fat cell proliferation"/>
    <property type="evidence" value="ECO:0007669"/>
    <property type="project" value="Ensembl"/>
</dbReference>
<dbReference type="GO" id="GO:0042446">
    <property type="term" value="P:hormone biosynthetic process"/>
    <property type="evidence" value="ECO:0007669"/>
    <property type="project" value="UniProtKB-KW"/>
</dbReference>
<dbReference type="GO" id="GO:0040018">
    <property type="term" value="P:positive regulation of multicellular organism growth"/>
    <property type="evidence" value="ECO:0007669"/>
    <property type="project" value="Ensembl"/>
</dbReference>
<dbReference type="GO" id="GO:0001666">
    <property type="term" value="P:response to hypoxia"/>
    <property type="evidence" value="ECO:0007669"/>
    <property type="project" value="Ensembl"/>
</dbReference>
<dbReference type="GO" id="GO:0097474">
    <property type="term" value="P:retinal cone cell apoptotic process"/>
    <property type="evidence" value="ECO:0007669"/>
    <property type="project" value="Ensembl"/>
</dbReference>
<dbReference type="GO" id="GO:0046549">
    <property type="term" value="P:retinal cone cell development"/>
    <property type="evidence" value="ECO:0007669"/>
    <property type="project" value="Ensembl"/>
</dbReference>
<dbReference type="GO" id="GO:0042404">
    <property type="term" value="P:thyroid hormone catabolic process"/>
    <property type="evidence" value="ECO:0000314"/>
    <property type="project" value="UniProtKB"/>
</dbReference>
<dbReference type="GO" id="GO:0042403">
    <property type="term" value="P:thyroid hormone metabolic process"/>
    <property type="evidence" value="ECO:0000316"/>
    <property type="project" value="ARUK-UCL"/>
</dbReference>
<dbReference type="FunFam" id="3.40.30.10:FF:000239">
    <property type="entry name" value="Iodothyronine deiodinase"/>
    <property type="match status" value="1"/>
</dbReference>
<dbReference type="Gene3D" id="3.40.30.10">
    <property type="entry name" value="Glutaredoxin"/>
    <property type="match status" value="1"/>
</dbReference>
<dbReference type="InterPro" id="IPR000643">
    <property type="entry name" value="Iodothyronine_deiodinase"/>
</dbReference>
<dbReference type="InterPro" id="IPR008261">
    <property type="entry name" value="Iodothyronine_deiodinase_AS"/>
</dbReference>
<dbReference type="InterPro" id="IPR027252">
    <property type="entry name" value="Iodothyronine_deiodinase_I/III"/>
</dbReference>
<dbReference type="InterPro" id="IPR036249">
    <property type="entry name" value="Thioredoxin-like_sf"/>
</dbReference>
<dbReference type="PANTHER" id="PTHR11781">
    <property type="entry name" value="IODOTHYRONINE DEIODINASE"/>
    <property type="match status" value="1"/>
</dbReference>
<dbReference type="PANTHER" id="PTHR11781:SF4">
    <property type="entry name" value="THYROXINE 5-DEIODINASE"/>
    <property type="match status" value="1"/>
</dbReference>
<dbReference type="Pfam" id="PF00837">
    <property type="entry name" value="T4_deiodinase"/>
    <property type="match status" value="1"/>
</dbReference>
<dbReference type="PIRSF" id="PIRSF001330">
    <property type="entry name" value="IOD"/>
    <property type="match status" value="1"/>
</dbReference>
<dbReference type="PIRSF" id="PIRSF500144">
    <property type="entry name" value="IODI_III"/>
    <property type="match status" value="1"/>
</dbReference>
<dbReference type="SUPFAM" id="SSF52833">
    <property type="entry name" value="Thioredoxin-like"/>
    <property type="match status" value="1"/>
</dbReference>
<dbReference type="PROSITE" id="PS01205">
    <property type="entry name" value="T4_DEIODINASE"/>
    <property type="match status" value="1"/>
</dbReference>
<organism>
    <name type="scientific">Homo sapiens</name>
    <name type="common">Human</name>
    <dbReference type="NCBI Taxonomy" id="9606"/>
    <lineage>
        <taxon>Eukaryota</taxon>
        <taxon>Metazoa</taxon>
        <taxon>Chordata</taxon>
        <taxon>Craniata</taxon>
        <taxon>Vertebrata</taxon>
        <taxon>Euteleostomi</taxon>
        <taxon>Mammalia</taxon>
        <taxon>Eutheria</taxon>
        <taxon>Euarchontoglires</taxon>
        <taxon>Primates</taxon>
        <taxon>Haplorrhini</taxon>
        <taxon>Catarrhini</taxon>
        <taxon>Hominidae</taxon>
        <taxon>Homo</taxon>
    </lineage>
</organism>
<evidence type="ECO:0000255" key="1"/>
<evidence type="ECO:0000256" key="2">
    <source>
        <dbReference type="SAM" id="MobiDB-lite"/>
    </source>
</evidence>
<evidence type="ECO:0000269" key="3">
    <source>
    </source>
</evidence>
<evidence type="ECO:0000269" key="4">
    <source>
    </source>
</evidence>
<evidence type="ECO:0000269" key="5">
    <source>
    </source>
</evidence>
<evidence type="ECO:0000269" key="6">
    <source>
    </source>
</evidence>
<evidence type="ECO:0000269" key="7">
    <source>
    </source>
</evidence>
<evidence type="ECO:0000269" key="8">
    <source>
    </source>
</evidence>
<evidence type="ECO:0000269" key="9">
    <source>
    </source>
</evidence>
<evidence type="ECO:0000305" key="10"/>
<evidence type="ECO:0000305" key="11">
    <source>
    </source>
</evidence>
<evidence type="ECO:0000305" key="12">
    <source>
    </source>
</evidence>
<evidence type="ECO:0000305" key="13">
    <source>
    </source>
</evidence>
<comment type="function">
    <text evidence="4 5 6 8 9">Plays a crucial role in the metabolism of thyroid hormones (TH) and has specific roles in TH activation and inactivation by deiodination (PubMed:7593630, PubMed:12586771, PubMed:12746313, PubMed:18821722). Catalyzes the deiodination of L-thyroxine (T4) to 3,3',5'-triiodothyronine (rT3), 3,5,3'-triiodothyronine (T3) to 3,3'-diiodothyronine (3,3'-T2), 3,5-diiodothyronine (3,5-T2) to 3-monoiodothyronine (3-T1), rT3 to 3',5'-diiodothyronine (3',5'-T2) and 3,3'-T2 to 3'-monoiodothyronine (3'-T1) via inner-ring deiodination (IRD) (PubMed:7593630, PubMed:12586771, PubMed:12746313, PubMed:18821722, PubMed:18339710). Catalyzes the deiodination of 3-T1 to L-thyronine (T0) via outer-ring deiodination (ORD) (PubMed:18821722). Catalyzes the tyrosyl ring deiodinations of 3,3',5,5'-tetraiodothyronamine, 3,3',5'-triiodothyronamine, 3,5,3'-triiodothyronamine, 3,5-diiodothyronamine, 3,3'-diiodothyronamine and 3-iodothyronamine (PubMed:18339710).</text>
</comment>
<comment type="catalytic activity">
    <reaction evidence="5">
        <text>3,3',5'-triiodo-L-thyronine + iodide + A + H(+) = L-thyroxine + AH2</text>
        <dbReference type="Rhea" id="RHEA:18897"/>
        <dbReference type="ChEBI" id="CHEBI:13193"/>
        <dbReference type="ChEBI" id="CHEBI:15378"/>
        <dbReference type="ChEBI" id="CHEBI:16382"/>
        <dbReference type="ChEBI" id="CHEBI:17499"/>
        <dbReference type="ChEBI" id="CHEBI:57261"/>
        <dbReference type="ChEBI" id="CHEBI:58448"/>
        <dbReference type="EC" id="1.21.99.3"/>
    </reaction>
    <physiologicalReaction direction="right-to-left" evidence="11">
        <dbReference type="Rhea" id="RHEA:18899"/>
    </physiologicalReaction>
</comment>
<comment type="catalytic activity">
    <reaction evidence="4 5 6 9">
        <text>3,3'-diiodo-L-thyronine + iodide + A + H(+) = 3,3',5-triiodo-L-thyronine + AH2</text>
        <dbReference type="Rhea" id="RHEA:82571"/>
        <dbReference type="ChEBI" id="CHEBI:13193"/>
        <dbReference type="ChEBI" id="CHEBI:15378"/>
        <dbReference type="ChEBI" id="CHEBI:16382"/>
        <dbReference type="ChEBI" id="CHEBI:17499"/>
        <dbReference type="ChEBI" id="CHEBI:176514"/>
        <dbReference type="ChEBI" id="CHEBI:533015"/>
    </reaction>
    <physiologicalReaction direction="right-to-left" evidence="11">
        <dbReference type="Rhea" id="RHEA:82573"/>
    </physiologicalReaction>
</comment>
<comment type="catalytic activity">
    <reaction evidence="8">
        <text>3-iodo-L-thyronine + iodide + A + H(+) = 3,5-diiodo-L-thyronine + AH2</text>
        <dbReference type="Rhea" id="RHEA:82895"/>
        <dbReference type="ChEBI" id="CHEBI:13193"/>
        <dbReference type="ChEBI" id="CHEBI:15378"/>
        <dbReference type="ChEBI" id="CHEBI:16382"/>
        <dbReference type="ChEBI" id="CHEBI:17499"/>
        <dbReference type="ChEBI" id="CHEBI:232626"/>
        <dbReference type="ChEBI" id="CHEBI:232627"/>
    </reaction>
    <physiologicalReaction direction="right-to-left" evidence="13">
        <dbReference type="Rhea" id="RHEA:82897"/>
    </physiologicalReaction>
</comment>
<comment type="catalytic activity">
    <reaction evidence="8">
        <text>L-thyronine + iodide + A + H(+) = 3-iodo-L-thyronine + AH2</text>
        <dbReference type="Rhea" id="RHEA:83771"/>
        <dbReference type="ChEBI" id="CHEBI:13193"/>
        <dbReference type="ChEBI" id="CHEBI:15378"/>
        <dbReference type="ChEBI" id="CHEBI:16382"/>
        <dbReference type="ChEBI" id="CHEBI:17499"/>
        <dbReference type="ChEBI" id="CHEBI:232627"/>
        <dbReference type="ChEBI" id="CHEBI:233333"/>
    </reaction>
    <physiologicalReaction direction="right-to-left" evidence="13">
        <dbReference type="Rhea" id="RHEA:83773"/>
    </physiologicalReaction>
</comment>
<comment type="catalytic activity">
    <reaction evidence="8">
        <text>3',5'-diiodo-L-thyronine + iodide + A + H(+) = 3,3',5'-triiodo-L-thyronine + AH2</text>
        <dbReference type="Rhea" id="RHEA:83775"/>
        <dbReference type="ChEBI" id="CHEBI:13193"/>
        <dbReference type="ChEBI" id="CHEBI:15378"/>
        <dbReference type="ChEBI" id="CHEBI:16382"/>
        <dbReference type="ChEBI" id="CHEBI:17499"/>
        <dbReference type="ChEBI" id="CHEBI:57261"/>
        <dbReference type="ChEBI" id="CHEBI:195762"/>
    </reaction>
    <physiologicalReaction direction="right-to-left" evidence="13">
        <dbReference type="Rhea" id="RHEA:83777"/>
    </physiologicalReaction>
</comment>
<comment type="catalytic activity">
    <reaction evidence="8">
        <text>3'-iodo-L-thyronine + iodide + A + H(+) = 3,3'-diiodo-L-thyronine + AH2</text>
        <dbReference type="Rhea" id="RHEA:83779"/>
        <dbReference type="ChEBI" id="CHEBI:13193"/>
        <dbReference type="ChEBI" id="CHEBI:15378"/>
        <dbReference type="ChEBI" id="CHEBI:16382"/>
        <dbReference type="ChEBI" id="CHEBI:17499"/>
        <dbReference type="ChEBI" id="CHEBI:176514"/>
        <dbReference type="ChEBI" id="CHEBI:232695"/>
    </reaction>
    <physiologicalReaction direction="right-to-left" evidence="13">
        <dbReference type="Rhea" id="RHEA:83781"/>
    </physiologicalReaction>
</comment>
<comment type="catalytic activity">
    <reaction evidence="6">
        <text>3,3',5'-triiodothyronamine + iodide + A + H(+) = 3,3',5,5'-tetraiodothyronamine + AH2</text>
        <dbReference type="Rhea" id="RHEA:83807"/>
        <dbReference type="ChEBI" id="CHEBI:13193"/>
        <dbReference type="ChEBI" id="CHEBI:15378"/>
        <dbReference type="ChEBI" id="CHEBI:16382"/>
        <dbReference type="ChEBI" id="CHEBI:17499"/>
        <dbReference type="ChEBI" id="CHEBI:233343"/>
        <dbReference type="ChEBI" id="CHEBI:233344"/>
    </reaction>
    <physiologicalReaction direction="right-to-left" evidence="12">
        <dbReference type="Rhea" id="RHEA:83809"/>
    </physiologicalReaction>
</comment>
<comment type="catalytic activity">
    <reaction evidence="6">
        <text>3',5'-diiodothyronamine + iodide + A + H(+) = 3,3',5'-triiodothyronamine + AH2</text>
        <dbReference type="Rhea" id="RHEA:83799"/>
        <dbReference type="ChEBI" id="CHEBI:13193"/>
        <dbReference type="ChEBI" id="CHEBI:15378"/>
        <dbReference type="ChEBI" id="CHEBI:16382"/>
        <dbReference type="ChEBI" id="CHEBI:17499"/>
        <dbReference type="ChEBI" id="CHEBI:233342"/>
        <dbReference type="ChEBI" id="CHEBI:233343"/>
    </reaction>
    <physiologicalReaction direction="right-to-left" evidence="12">
        <dbReference type="Rhea" id="RHEA:83801"/>
    </physiologicalReaction>
</comment>
<comment type="catalytic activity">
    <reaction evidence="6">
        <text>3,3'-diiodothyronamine + iodide + A + H(+) = 3,3',5-triiodothyronamine + AH2</text>
        <dbReference type="Rhea" id="RHEA:83811"/>
        <dbReference type="ChEBI" id="CHEBI:13193"/>
        <dbReference type="ChEBI" id="CHEBI:15378"/>
        <dbReference type="ChEBI" id="CHEBI:16382"/>
        <dbReference type="ChEBI" id="CHEBI:17499"/>
        <dbReference type="ChEBI" id="CHEBI:233341"/>
        <dbReference type="ChEBI" id="CHEBI:233426"/>
    </reaction>
    <physiologicalReaction direction="right-to-left" evidence="12">
        <dbReference type="Rhea" id="RHEA:83813"/>
    </physiologicalReaction>
</comment>
<comment type="catalytic activity">
    <reaction evidence="6">
        <text>3-iodothyronamine + iodide + A + H(+) = 3,5-diiodothyronamine + AH2</text>
        <dbReference type="Rhea" id="RHEA:83823"/>
        <dbReference type="ChEBI" id="CHEBI:13193"/>
        <dbReference type="ChEBI" id="CHEBI:15378"/>
        <dbReference type="ChEBI" id="CHEBI:16382"/>
        <dbReference type="ChEBI" id="CHEBI:17499"/>
        <dbReference type="ChEBI" id="CHEBI:231647"/>
        <dbReference type="ChEBI" id="CHEBI:233340"/>
    </reaction>
    <physiologicalReaction direction="right-to-left" evidence="12">
        <dbReference type="Rhea" id="RHEA:83825"/>
    </physiologicalReaction>
</comment>
<comment type="catalytic activity">
    <reaction evidence="6">
        <text>3'-iodothyronamine + iodide + A + H(+) = 3,3'-diiodothyronamine + AH2</text>
        <dbReference type="Rhea" id="RHEA:83815"/>
        <dbReference type="ChEBI" id="CHEBI:13193"/>
        <dbReference type="ChEBI" id="CHEBI:15378"/>
        <dbReference type="ChEBI" id="CHEBI:16382"/>
        <dbReference type="ChEBI" id="CHEBI:17499"/>
        <dbReference type="ChEBI" id="CHEBI:233339"/>
        <dbReference type="ChEBI" id="CHEBI:233341"/>
    </reaction>
    <physiologicalReaction direction="right-to-left" evidence="12">
        <dbReference type="Rhea" id="RHEA:83817"/>
    </physiologicalReaction>
</comment>
<comment type="catalytic activity">
    <reaction evidence="6">
        <text>thyronamine + iodide + A + H(+) = 3-iodothyronamine + AH2</text>
        <dbReference type="Rhea" id="RHEA:83819"/>
        <dbReference type="ChEBI" id="CHEBI:13193"/>
        <dbReference type="ChEBI" id="CHEBI:15378"/>
        <dbReference type="ChEBI" id="CHEBI:16382"/>
        <dbReference type="ChEBI" id="CHEBI:17499"/>
        <dbReference type="ChEBI" id="CHEBI:231647"/>
        <dbReference type="ChEBI" id="CHEBI:233334"/>
    </reaction>
    <physiologicalReaction direction="right-to-left" evidence="12">
        <dbReference type="Rhea" id="RHEA:83821"/>
    </physiologicalReaction>
</comment>
<comment type="biophysicochemical properties">
    <kinetics>
        <KM evidence="5">4.3 nM for L-thyroxine</KM>
        <KM evidence="5">3.1 nM for 3,3',5-triiodo-L-thyronine</KM>
        <KM evidence="9">0.0012 uM for 3,3',5-triiodo-L-thyronine</KM>
        <KM evidence="6">0.006 uM for 3,5,3'-triiodothyronine</KM>
        <KM evidence="6">0.017 uM for 3,5,3'-triiodothyronamine</KM>
        <KM evidence="6">1.2 uM for 3-iodothyronamine</KM>
        <Vmax evidence="5">1.4 pmol/min/mg enzyme towards L-thyroxine</Vmax>
        <Vmax evidence="5">0.8 pmol/min/mg enzyme towards 3,3',5-triiodo-L-thyronine</Vmax>
        <Vmax evidence="9">4.02 pmol/min/mg enzyme towards 3,3',5-triiodo-L-thyronine</Vmax>
        <Vmax evidence="6">2.9 pmol/min/mg enzyme towards 3,5,3'-triiodothyronine</Vmax>
        <Vmax evidence="6">1.9 pmol/min/mg enzyme towards 3,5,3'-triiodothyronamine</Vmax>
        <Vmax evidence="6">2.4 pmol/min/mg enzyme towards 3-iodothyronamine</Vmax>
    </kinetics>
</comment>
<comment type="subunit">
    <text evidence="4 7">Monomer (PubMed:12586771). Homodimer (PubMed:12586771, PubMed:18356288). May undergo minor heretodimerization with DIO1 and DIO2 (PubMed:18356288).</text>
</comment>
<comment type="subcellular location">
    <subcellularLocation>
        <location evidence="3">Cell membrane</location>
        <topology evidence="1">Single-pass type II membrane protein</topology>
    </subcellularLocation>
    <subcellularLocation>
        <location evidence="3">Endosome membrane</location>
        <topology evidence="1">Single-pass type II membrane protein</topology>
    </subcellularLocation>
</comment>
<comment type="tissue specificity">
    <text evidence="9">Expressed in placenta and several fetal tissues.</text>
</comment>
<comment type="similarity">
    <text evidence="10">Belongs to the iodothyronine deiodinase family.</text>
</comment>
<comment type="caution">
    <text evidence="10">It is uncertain whether Met-1 or Met-27 is the initiator.</text>
</comment>
<comment type="sequence caution" evidence="10">
    <conflict type="frameshift">
        <sequence resource="EMBL-CDS" id="AAB35616"/>
    </conflict>
</comment>
<comment type="sequence caution" evidence="10">
    <conflict type="erroneous initiation">
        <sequence resource="EMBL-CDS" id="AAH17717"/>
    </conflict>
    <text>Truncated N-terminus.</text>
</comment>